<gene>
    <name evidence="1" type="primary">ybeY</name>
    <name type="ordered locus">TRQ2_1403</name>
</gene>
<comment type="function">
    <text evidence="1">Single strand-specific metallo-endoribonuclease involved in late-stage 70S ribosome quality control and in maturation of the 3' terminus of the 16S rRNA.</text>
</comment>
<comment type="cofactor">
    <cofactor evidence="1">
        <name>Zn(2+)</name>
        <dbReference type="ChEBI" id="CHEBI:29105"/>
    </cofactor>
    <text evidence="1">Binds 1 zinc ion.</text>
</comment>
<comment type="subcellular location">
    <subcellularLocation>
        <location evidence="1">Cytoplasm</location>
    </subcellularLocation>
</comment>
<comment type="similarity">
    <text evidence="1">Belongs to the endoribonuclease YbeY family.</text>
</comment>
<feature type="chain" id="PRO_1000089223" description="Endoribonuclease YbeY">
    <location>
        <begin position="1"/>
        <end position="150"/>
    </location>
</feature>
<feature type="binding site" evidence="1">
    <location>
        <position position="102"/>
    </location>
    <ligand>
        <name>Zn(2+)</name>
        <dbReference type="ChEBI" id="CHEBI:29105"/>
        <note>catalytic</note>
    </ligand>
</feature>
<feature type="binding site" evidence="1">
    <location>
        <position position="106"/>
    </location>
    <ligand>
        <name>Zn(2+)</name>
        <dbReference type="ChEBI" id="CHEBI:29105"/>
        <note>catalytic</note>
    </ligand>
</feature>
<feature type="binding site" evidence="1">
    <location>
        <position position="112"/>
    </location>
    <ligand>
        <name>Zn(2+)</name>
        <dbReference type="ChEBI" id="CHEBI:29105"/>
        <note>catalytic</note>
    </ligand>
</feature>
<sequence length="150" mass="17535">MIRILGEGKGSKLLENLKEKLEEIVKKEIGDVHVNVILVSEDEIKELNQQFRGQDLPTDVLTFPLMEEDVYGEIYVCPLIVEENAREFNNTFEKELLEVVIHGILHLAGYDHEFEDRNSKEMFEKQKKYVEEVWGEWRSNPSEDSDPGKR</sequence>
<name>YBEY_THESQ</name>
<organism>
    <name type="scientific">Thermotoga sp. (strain RQ2)</name>
    <dbReference type="NCBI Taxonomy" id="126740"/>
    <lineage>
        <taxon>Bacteria</taxon>
        <taxon>Thermotogati</taxon>
        <taxon>Thermotogota</taxon>
        <taxon>Thermotogae</taxon>
        <taxon>Thermotogales</taxon>
        <taxon>Thermotogaceae</taxon>
        <taxon>Thermotoga</taxon>
    </lineage>
</organism>
<protein>
    <recommendedName>
        <fullName evidence="1">Endoribonuclease YbeY</fullName>
        <ecNumber evidence="1">3.1.-.-</ecNumber>
    </recommendedName>
</protein>
<reference key="1">
    <citation type="journal article" date="2011" name="J. Bacteriol.">
        <title>Genome sequence of Thermotoga sp. strain RQ2, a hyperthermophilic bacterium isolated from a geothermally heated region of the seafloor near Ribeira Quente, the Azores.</title>
        <authorList>
            <person name="Swithers K.S."/>
            <person name="DiPippo J.L."/>
            <person name="Bruce D.C."/>
            <person name="Detter C."/>
            <person name="Tapia R."/>
            <person name="Han S."/>
            <person name="Saunders E."/>
            <person name="Goodwin L.A."/>
            <person name="Han J."/>
            <person name="Woyke T."/>
            <person name="Pitluck S."/>
            <person name="Pennacchio L."/>
            <person name="Nolan M."/>
            <person name="Mikhailova N."/>
            <person name="Lykidis A."/>
            <person name="Land M.L."/>
            <person name="Brettin T."/>
            <person name="Stetter K.O."/>
            <person name="Nelson K.E."/>
            <person name="Gogarten J.P."/>
            <person name="Noll K.M."/>
        </authorList>
    </citation>
    <scope>NUCLEOTIDE SEQUENCE [LARGE SCALE GENOMIC DNA]</scope>
    <source>
        <strain>RQ2</strain>
    </source>
</reference>
<accession>B1LBP9</accession>
<proteinExistence type="inferred from homology"/>
<evidence type="ECO:0000255" key="1">
    <source>
        <dbReference type="HAMAP-Rule" id="MF_00009"/>
    </source>
</evidence>
<keyword id="KW-0963">Cytoplasm</keyword>
<keyword id="KW-0255">Endonuclease</keyword>
<keyword id="KW-0378">Hydrolase</keyword>
<keyword id="KW-0479">Metal-binding</keyword>
<keyword id="KW-0540">Nuclease</keyword>
<keyword id="KW-0690">Ribosome biogenesis</keyword>
<keyword id="KW-0698">rRNA processing</keyword>
<keyword id="KW-0862">Zinc</keyword>
<dbReference type="EC" id="3.1.-.-" evidence="1"/>
<dbReference type="EMBL" id="CP000969">
    <property type="protein sequence ID" value="ACB09747.1"/>
    <property type="molecule type" value="Genomic_DNA"/>
</dbReference>
<dbReference type="RefSeq" id="WP_012311098.1">
    <property type="nucleotide sequence ID" value="NC_010483.1"/>
</dbReference>
<dbReference type="BMRB" id="B1LBP9"/>
<dbReference type="SMR" id="B1LBP9"/>
<dbReference type="KEGG" id="trq:TRQ2_1403"/>
<dbReference type="HOGENOM" id="CLU_106710_3_3_0"/>
<dbReference type="Proteomes" id="UP000001687">
    <property type="component" value="Chromosome"/>
</dbReference>
<dbReference type="GO" id="GO:0005737">
    <property type="term" value="C:cytoplasm"/>
    <property type="evidence" value="ECO:0007669"/>
    <property type="project" value="UniProtKB-SubCell"/>
</dbReference>
<dbReference type="GO" id="GO:0004222">
    <property type="term" value="F:metalloendopeptidase activity"/>
    <property type="evidence" value="ECO:0007669"/>
    <property type="project" value="InterPro"/>
</dbReference>
<dbReference type="GO" id="GO:0004521">
    <property type="term" value="F:RNA endonuclease activity"/>
    <property type="evidence" value="ECO:0007669"/>
    <property type="project" value="UniProtKB-UniRule"/>
</dbReference>
<dbReference type="GO" id="GO:0008270">
    <property type="term" value="F:zinc ion binding"/>
    <property type="evidence" value="ECO:0007669"/>
    <property type="project" value="UniProtKB-UniRule"/>
</dbReference>
<dbReference type="GO" id="GO:0006364">
    <property type="term" value="P:rRNA processing"/>
    <property type="evidence" value="ECO:0007669"/>
    <property type="project" value="UniProtKB-UniRule"/>
</dbReference>
<dbReference type="Gene3D" id="3.40.390.30">
    <property type="entry name" value="Metalloproteases ('zincins'), catalytic domain"/>
    <property type="match status" value="1"/>
</dbReference>
<dbReference type="HAMAP" id="MF_00009">
    <property type="entry name" value="Endoribonucl_YbeY"/>
    <property type="match status" value="1"/>
</dbReference>
<dbReference type="InterPro" id="IPR023091">
    <property type="entry name" value="MetalPrtase_cat_dom_sf_prd"/>
</dbReference>
<dbReference type="InterPro" id="IPR002036">
    <property type="entry name" value="YbeY"/>
</dbReference>
<dbReference type="InterPro" id="IPR020549">
    <property type="entry name" value="YbeY_CS"/>
</dbReference>
<dbReference type="NCBIfam" id="TIGR00043">
    <property type="entry name" value="rRNA maturation RNase YbeY"/>
    <property type="match status" value="1"/>
</dbReference>
<dbReference type="PANTHER" id="PTHR46986">
    <property type="entry name" value="ENDORIBONUCLEASE YBEY, CHLOROPLASTIC"/>
    <property type="match status" value="1"/>
</dbReference>
<dbReference type="PANTHER" id="PTHR46986:SF1">
    <property type="entry name" value="ENDORIBONUCLEASE YBEY, CHLOROPLASTIC"/>
    <property type="match status" value="1"/>
</dbReference>
<dbReference type="Pfam" id="PF02130">
    <property type="entry name" value="YbeY"/>
    <property type="match status" value="1"/>
</dbReference>
<dbReference type="SUPFAM" id="SSF55486">
    <property type="entry name" value="Metalloproteases ('zincins'), catalytic domain"/>
    <property type="match status" value="1"/>
</dbReference>
<dbReference type="PROSITE" id="PS01306">
    <property type="entry name" value="UPF0054"/>
    <property type="match status" value="1"/>
</dbReference>